<feature type="chain" id="PRO_1000023308" description="Thymidylate kinase">
    <location>
        <begin position="1"/>
        <end position="225"/>
    </location>
</feature>
<feature type="binding site" evidence="1">
    <location>
        <begin position="10"/>
        <end position="17"/>
    </location>
    <ligand>
        <name>ATP</name>
        <dbReference type="ChEBI" id="CHEBI:30616"/>
    </ligand>
</feature>
<name>KTHY_TRIEI</name>
<accession>Q115I0</accession>
<comment type="function">
    <text evidence="1">Phosphorylation of dTMP to form dTDP in both de novo and salvage pathways of dTTP synthesis.</text>
</comment>
<comment type="catalytic activity">
    <reaction evidence="1">
        <text>dTMP + ATP = dTDP + ADP</text>
        <dbReference type="Rhea" id="RHEA:13517"/>
        <dbReference type="ChEBI" id="CHEBI:30616"/>
        <dbReference type="ChEBI" id="CHEBI:58369"/>
        <dbReference type="ChEBI" id="CHEBI:63528"/>
        <dbReference type="ChEBI" id="CHEBI:456216"/>
        <dbReference type="EC" id="2.7.4.9"/>
    </reaction>
</comment>
<comment type="similarity">
    <text evidence="1">Belongs to the thymidylate kinase family.</text>
</comment>
<gene>
    <name evidence="1" type="primary">tmk</name>
    <name type="ordered locus">Tery_1564</name>
</gene>
<proteinExistence type="inferred from homology"/>
<evidence type="ECO:0000255" key="1">
    <source>
        <dbReference type="HAMAP-Rule" id="MF_00165"/>
    </source>
</evidence>
<organism>
    <name type="scientific">Trichodesmium erythraeum (strain IMS101)</name>
    <dbReference type="NCBI Taxonomy" id="203124"/>
    <lineage>
        <taxon>Bacteria</taxon>
        <taxon>Bacillati</taxon>
        <taxon>Cyanobacteriota</taxon>
        <taxon>Cyanophyceae</taxon>
        <taxon>Oscillatoriophycideae</taxon>
        <taxon>Oscillatoriales</taxon>
        <taxon>Microcoleaceae</taxon>
        <taxon>Trichodesmium</taxon>
    </lineage>
</organism>
<protein>
    <recommendedName>
        <fullName evidence="1">Thymidylate kinase</fullName>
        <ecNumber evidence="1">2.7.4.9</ecNumber>
    </recommendedName>
    <alternativeName>
        <fullName evidence="1">dTMP kinase</fullName>
    </alternativeName>
</protein>
<keyword id="KW-0067">ATP-binding</keyword>
<keyword id="KW-0418">Kinase</keyword>
<keyword id="KW-0545">Nucleotide biosynthesis</keyword>
<keyword id="KW-0547">Nucleotide-binding</keyword>
<keyword id="KW-0808">Transferase</keyword>
<reference key="1">
    <citation type="journal article" date="2015" name="Proc. Natl. Acad. Sci. U.S.A.">
        <title>Trichodesmium genome maintains abundant, widespread noncoding DNA in situ, despite oligotrophic lifestyle.</title>
        <authorList>
            <person name="Walworth N."/>
            <person name="Pfreundt U."/>
            <person name="Nelson W.C."/>
            <person name="Mincer T."/>
            <person name="Heidelberg J.F."/>
            <person name="Fu F."/>
            <person name="Waterbury J.B."/>
            <person name="Glavina del Rio T."/>
            <person name="Goodwin L."/>
            <person name="Kyrpides N.C."/>
            <person name="Land M.L."/>
            <person name="Woyke T."/>
            <person name="Hutchins D.A."/>
            <person name="Hess W.R."/>
            <person name="Webb E.A."/>
        </authorList>
    </citation>
    <scope>NUCLEOTIDE SEQUENCE [LARGE SCALE GENOMIC DNA]</scope>
    <source>
        <strain>IMS101</strain>
    </source>
</reference>
<dbReference type="EC" id="2.7.4.9" evidence="1"/>
<dbReference type="EMBL" id="CP000393">
    <property type="protein sequence ID" value="ABG50844.1"/>
    <property type="molecule type" value="Genomic_DNA"/>
</dbReference>
<dbReference type="RefSeq" id="WP_011611220.1">
    <property type="nucleotide sequence ID" value="NC_008312.1"/>
</dbReference>
<dbReference type="SMR" id="Q115I0"/>
<dbReference type="STRING" id="203124.Tery_1564"/>
<dbReference type="KEGG" id="ter:Tery_1564"/>
<dbReference type="eggNOG" id="COG0125">
    <property type="taxonomic scope" value="Bacteria"/>
</dbReference>
<dbReference type="HOGENOM" id="CLU_049131_0_0_3"/>
<dbReference type="OrthoDB" id="9774907at2"/>
<dbReference type="GO" id="GO:0005829">
    <property type="term" value="C:cytosol"/>
    <property type="evidence" value="ECO:0007669"/>
    <property type="project" value="TreeGrafter"/>
</dbReference>
<dbReference type="GO" id="GO:0005524">
    <property type="term" value="F:ATP binding"/>
    <property type="evidence" value="ECO:0007669"/>
    <property type="project" value="UniProtKB-UniRule"/>
</dbReference>
<dbReference type="GO" id="GO:0004798">
    <property type="term" value="F:dTMP kinase activity"/>
    <property type="evidence" value="ECO:0007669"/>
    <property type="project" value="UniProtKB-UniRule"/>
</dbReference>
<dbReference type="GO" id="GO:0006233">
    <property type="term" value="P:dTDP biosynthetic process"/>
    <property type="evidence" value="ECO:0007669"/>
    <property type="project" value="InterPro"/>
</dbReference>
<dbReference type="GO" id="GO:0006235">
    <property type="term" value="P:dTTP biosynthetic process"/>
    <property type="evidence" value="ECO:0007669"/>
    <property type="project" value="UniProtKB-UniRule"/>
</dbReference>
<dbReference type="GO" id="GO:0006227">
    <property type="term" value="P:dUDP biosynthetic process"/>
    <property type="evidence" value="ECO:0007669"/>
    <property type="project" value="TreeGrafter"/>
</dbReference>
<dbReference type="CDD" id="cd01672">
    <property type="entry name" value="TMPK"/>
    <property type="match status" value="1"/>
</dbReference>
<dbReference type="FunFam" id="3.40.50.300:FF:000225">
    <property type="entry name" value="Thymidylate kinase"/>
    <property type="match status" value="1"/>
</dbReference>
<dbReference type="Gene3D" id="3.40.50.300">
    <property type="entry name" value="P-loop containing nucleotide triphosphate hydrolases"/>
    <property type="match status" value="1"/>
</dbReference>
<dbReference type="HAMAP" id="MF_00165">
    <property type="entry name" value="Thymidylate_kinase"/>
    <property type="match status" value="1"/>
</dbReference>
<dbReference type="InterPro" id="IPR027417">
    <property type="entry name" value="P-loop_NTPase"/>
</dbReference>
<dbReference type="InterPro" id="IPR039430">
    <property type="entry name" value="Thymidylate_kin-like_dom"/>
</dbReference>
<dbReference type="InterPro" id="IPR018095">
    <property type="entry name" value="Thymidylate_kin_CS"/>
</dbReference>
<dbReference type="InterPro" id="IPR018094">
    <property type="entry name" value="Thymidylate_kinase"/>
</dbReference>
<dbReference type="NCBIfam" id="TIGR00041">
    <property type="entry name" value="DTMP_kinase"/>
    <property type="match status" value="1"/>
</dbReference>
<dbReference type="PANTHER" id="PTHR10344">
    <property type="entry name" value="THYMIDYLATE KINASE"/>
    <property type="match status" value="1"/>
</dbReference>
<dbReference type="PANTHER" id="PTHR10344:SF4">
    <property type="entry name" value="UMP-CMP KINASE 2, MITOCHONDRIAL"/>
    <property type="match status" value="1"/>
</dbReference>
<dbReference type="Pfam" id="PF02223">
    <property type="entry name" value="Thymidylate_kin"/>
    <property type="match status" value="1"/>
</dbReference>
<dbReference type="SUPFAM" id="SSF52540">
    <property type="entry name" value="P-loop containing nucleoside triphosphate hydrolases"/>
    <property type="match status" value="1"/>
</dbReference>
<dbReference type="PROSITE" id="PS01331">
    <property type="entry name" value="THYMIDYLATE_KINASE"/>
    <property type="match status" value="1"/>
</dbReference>
<sequence>MIGKFIVFEGVEGGGKTTQIELLQDWLLETGESRQILPKSIDLDLEVVITREPGGTKLGKALRELLLSPDVLAEKIQETSELLLYAADRAQHIEALIKPCLERGTIVLCDRFIDSTIAYQGYGRGLDVELIKQLNYIATGGLKSDLTFWLDIDVEIGLARAKSRGNFDRMEQANIEFHRRVQQGYQELAKNNSLIVRIDANLTREKVQQQIQAIIMQKLVEWKYI</sequence>